<accession>Q6L2M4</accession>
<evidence type="ECO:0000255" key="1">
    <source>
        <dbReference type="HAMAP-Rule" id="MF_00361"/>
    </source>
</evidence>
<name>NADK_PICTO</name>
<comment type="function">
    <text evidence="1">Involved in the regulation of the intracellular balance of NAD and NADP, and is a key enzyme in the biosynthesis of NADP. Catalyzes specifically the phosphorylation on 2'-hydroxyl of the adenosine moiety of NAD to yield NADP.</text>
</comment>
<comment type="catalytic activity">
    <reaction evidence="1">
        <text>NAD(+) + ATP = ADP + NADP(+) + H(+)</text>
        <dbReference type="Rhea" id="RHEA:18629"/>
        <dbReference type="ChEBI" id="CHEBI:15378"/>
        <dbReference type="ChEBI" id="CHEBI:30616"/>
        <dbReference type="ChEBI" id="CHEBI:57540"/>
        <dbReference type="ChEBI" id="CHEBI:58349"/>
        <dbReference type="ChEBI" id="CHEBI:456216"/>
        <dbReference type="EC" id="2.7.1.23"/>
    </reaction>
</comment>
<comment type="cofactor">
    <cofactor evidence="1">
        <name>a divalent metal cation</name>
        <dbReference type="ChEBI" id="CHEBI:60240"/>
    </cofactor>
</comment>
<comment type="subcellular location">
    <subcellularLocation>
        <location evidence="1">Cytoplasm</location>
    </subcellularLocation>
</comment>
<comment type="similarity">
    <text evidence="1">Belongs to the NAD kinase family.</text>
</comment>
<proteinExistence type="inferred from homology"/>
<reference key="1">
    <citation type="journal article" date="2004" name="Proc. Natl. Acad. Sci. U.S.A.">
        <title>Genome sequence of Picrophilus torridus and its implications for life around pH 0.</title>
        <authorList>
            <person name="Fuetterer O."/>
            <person name="Angelov A."/>
            <person name="Liesegang H."/>
            <person name="Gottschalk G."/>
            <person name="Schleper C."/>
            <person name="Schepers B."/>
            <person name="Dock C."/>
            <person name="Antranikian G."/>
            <person name="Liebl W."/>
        </authorList>
    </citation>
    <scope>NUCLEOTIDE SEQUENCE [LARGE SCALE GENOMIC DNA]</scope>
    <source>
        <strain>ATCC 700027 / DSM 9790 / JCM 10055 / NBRC 100828 / KAW 2/3</strain>
    </source>
</reference>
<keyword id="KW-0067">ATP-binding</keyword>
<keyword id="KW-0963">Cytoplasm</keyword>
<keyword id="KW-0418">Kinase</keyword>
<keyword id="KW-0520">NAD</keyword>
<keyword id="KW-0521">NADP</keyword>
<keyword id="KW-0547">Nucleotide-binding</keyword>
<keyword id="KW-0808">Transferase</keyword>
<gene>
    <name evidence="1" type="primary">nadK</name>
    <name type="ordered locus">PTO0193</name>
</gene>
<organism>
    <name type="scientific">Picrophilus torridus (strain ATCC 700027 / DSM 9790 / JCM 10055 / NBRC 100828 / KAW 2/3)</name>
    <dbReference type="NCBI Taxonomy" id="1122961"/>
    <lineage>
        <taxon>Archaea</taxon>
        <taxon>Methanobacteriati</taxon>
        <taxon>Thermoplasmatota</taxon>
        <taxon>Thermoplasmata</taxon>
        <taxon>Thermoplasmatales</taxon>
        <taxon>Picrophilaceae</taxon>
        <taxon>Picrophilus</taxon>
    </lineage>
</organism>
<feature type="chain" id="PRO_0000120704" description="NAD kinase">
    <location>
        <begin position="1"/>
        <end position="270"/>
    </location>
</feature>
<feature type="active site" description="Proton acceptor" evidence="1">
    <location>
        <position position="62"/>
    </location>
</feature>
<feature type="binding site" evidence="1">
    <location>
        <begin position="62"/>
        <end position="63"/>
    </location>
    <ligand>
        <name>NAD(+)</name>
        <dbReference type="ChEBI" id="CHEBI:57540"/>
    </ligand>
</feature>
<feature type="binding site" evidence="1">
    <location>
        <position position="67"/>
    </location>
    <ligand>
        <name>NAD(+)</name>
        <dbReference type="ChEBI" id="CHEBI:57540"/>
    </ligand>
</feature>
<feature type="binding site" evidence="1">
    <location>
        <begin position="129"/>
        <end position="130"/>
    </location>
    <ligand>
        <name>NAD(+)</name>
        <dbReference type="ChEBI" id="CHEBI:57540"/>
    </ligand>
</feature>
<feature type="binding site" evidence="1">
    <location>
        <position position="140"/>
    </location>
    <ligand>
        <name>NAD(+)</name>
        <dbReference type="ChEBI" id="CHEBI:57540"/>
    </ligand>
</feature>
<feature type="binding site" evidence="1">
    <location>
        <position position="159"/>
    </location>
    <ligand>
        <name>NAD(+)</name>
        <dbReference type="ChEBI" id="CHEBI:57540"/>
    </ligand>
</feature>
<feature type="binding site" evidence="1">
    <location>
        <position position="167"/>
    </location>
    <ligand>
        <name>NAD(+)</name>
        <dbReference type="ChEBI" id="CHEBI:57540"/>
    </ligand>
</feature>
<feature type="binding site" evidence="1">
    <location>
        <begin position="170"/>
        <end position="175"/>
    </location>
    <ligand>
        <name>NAD(+)</name>
        <dbReference type="ChEBI" id="CHEBI:57540"/>
    </ligand>
</feature>
<feature type="binding site" evidence="1">
    <location>
        <position position="194"/>
    </location>
    <ligand>
        <name>NAD(+)</name>
        <dbReference type="ChEBI" id="CHEBI:57540"/>
    </ligand>
</feature>
<feature type="binding site" evidence="1">
    <location>
        <position position="227"/>
    </location>
    <ligand>
        <name>NAD(+)</name>
        <dbReference type="ChEBI" id="CHEBI:57540"/>
    </ligand>
</feature>
<protein>
    <recommendedName>
        <fullName evidence="1">NAD kinase</fullName>
        <ecNumber evidence="1">2.7.1.23</ecNumber>
    </recommendedName>
    <alternativeName>
        <fullName evidence="1">ATP-dependent NAD kinase</fullName>
    </alternativeName>
</protein>
<sequence>MKVAIVTKINCKSCINIARIIISALPSDWDIIYEKSLARAIKKPGLEINEINADIIIVIGGDGTILRTAQFAHGNILGINVGGLGFLSEIEIGNIEASILKLIRNEYTIIEYMGLDVYVNGVYSGKAINDAVIHTDKVSKIRKFRLYENNYFIETTSADGVIVATPIGSTSYSFSAGGPILMPNLNGIVVSYIAPVGFRSRSIVFSEKTDLKIAIVGERSLLTIDGQIEKKLSKNDVVNIRVSENGARFISMYTNFYEKLREKLIKDVVN</sequence>
<dbReference type="EC" id="2.7.1.23" evidence="1"/>
<dbReference type="EMBL" id="AE017261">
    <property type="protein sequence ID" value="AAT42778.1"/>
    <property type="molecule type" value="Genomic_DNA"/>
</dbReference>
<dbReference type="RefSeq" id="WP_011176994.1">
    <property type="nucleotide sequence ID" value="NC_005877.1"/>
</dbReference>
<dbReference type="SMR" id="Q6L2M4"/>
<dbReference type="FunCoup" id="Q6L2M4">
    <property type="interactions" value="102"/>
</dbReference>
<dbReference type="STRING" id="263820.PTO0193"/>
<dbReference type="PaxDb" id="263820-PTO0193"/>
<dbReference type="GeneID" id="2845016"/>
<dbReference type="KEGG" id="pto:PTO0193"/>
<dbReference type="PATRIC" id="fig|263820.9.peg.211"/>
<dbReference type="eggNOG" id="arCOG01348">
    <property type="taxonomic scope" value="Archaea"/>
</dbReference>
<dbReference type="HOGENOM" id="CLU_008831_0_1_2"/>
<dbReference type="InParanoid" id="Q6L2M4"/>
<dbReference type="OrthoDB" id="77798at2157"/>
<dbReference type="Proteomes" id="UP000000438">
    <property type="component" value="Chromosome"/>
</dbReference>
<dbReference type="GO" id="GO:0005737">
    <property type="term" value="C:cytoplasm"/>
    <property type="evidence" value="ECO:0007669"/>
    <property type="project" value="UniProtKB-SubCell"/>
</dbReference>
<dbReference type="GO" id="GO:0005524">
    <property type="term" value="F:ATP binding"/>
    <property type="evidence" value="ECO:0007669"/>
    <property type="project" value="UniProtKB-KW"/>
</dbReference>
<dbReference type="GO" id="GO:0046872">
    <property type="term" value="F:metal ion binding"/>
    <property type="evidence" value="ECO:0007669"/>
    <property type="project" value="UniProtKB-UniRule"/>
</dbReference>
<dbReference type="GO" id="GO:0003951">
    <property type="term" value="F:NAD+ kinase activity"/>
    <property type="evidence" value="ECO:0007669"/>
    <property type="project" value="UniProtKB-UniRule"/>
</dbReference>
<dbReference type="GO" id="GO:0019674">
    <property type="term" value="P:NAD metabolic process"/>
    <property type="evidence" value="ECO:0007669"/>
    <property type="project" value="InterPro"/>
</dbReference>
<dbReference type="GO" id="GO:0006741">
    <property type="term" value="P:NADP biosynthetic process"/>
    <property type="evidence" value="ECO:0007669"/>
    <property type="project" value="UniProtKB-UniRule"/>
</dbReference>
<dbReference type="Gene3D" id="3.40.50.10330">
    <property type="entry name" value="Probable inorganic polyphosphate/atp-NAD kinase, domain 1"/>
    <property type="match status" value="1"/>
</dbReference>
<dbReference type="Gene3D" id="2.60.200.30">
    <property type="entry name" value="Probable inorganic polyphosphate/atp-NAD kinase, domain 2"/>
    <property type="match status" value="1"/>
</dbReference>
<dbReference type="HAMAP" id="MF_00361">
    <property type="entry name" value="NAD_kinase"/>
    <property type="match status" value="1"/>
</dbReference>
<dbReference type="InterPro" id="IPR017438">
    <property type="entry name" value="ATP-NAD_kinase_N"/>
</dbReference>
<dbReference type="InterPro" id="IPR017437">
    <property type="entry name" value="ATP-NAD_kinase_PpnK-typ_C"/>
</dbReference>
<dbReference type="InterPro" id="IPR016064">
    <property type="entry name" value="NAD/diacylglycerol_kinase_sf"/>
</dbReference>
<dbReference type="InterPro" id="IPR002504">
    <property type="entry name" value="NADK"/>
</dbReference>
<dbReference type="NCBIfam" id="NF002255">
    <property type="entry name" value="PRK01185.1"/>
    <property type="match status" value="1"/>
</dbReference>
<dbReference type="PANTHER" id="PTHR20275:SF43">
    <property type="entry name" value="BIFUNCTIONAL NADP PHOSPHATASE_NAD KINASE"/>
    <property type="match status" value="1"/>
</dbReference>
<dbReference type="PANTHER" id="PTHR20275">
    <property type="entry name" value="NAD KINASE"/>
    <property type="match status" value="1"/>
</dbReference>
<dbReference type="Pfam" id="PF01513">
    <property type="entry name" value="NAD_kinase"/>
    <property type="match status" value="1"/>
</dbReference>
<dbReference type="Pfam" id="PF20143">
    <property type="entry name" value="NAD_kinase_C"/>
    <property type="match status" value="1"/>
</dbReference>
<dbReference type="SUPFAM" id="SSF111331">
    <property type="entry name" value="NAD kinase/diacylglycerol kinase-like"/>
    <property type="match status" value="1"/>
</dbReference>